<organism>
    <name type="scientific">Mesostigma viride</name>
    <name type="common">Green alga</name>
    <dbReference type="NCBI Taxonomy" id="41882"/>
    <lineage>
        <taxon>Eukaryota</taxon>
        <taxon>Viridiplantae</taxon>
        <taxon>Streptophyta</taxon>
        <taxon>Mesostigmatophyceae</taxon>
        <taxon>Mesostigmatales</taxon>
        <taxon>Mesostigmataceae</taxon>
        <taxon>Mesostigma</taxon>
    </lineage>
</organism>
<accession>Q9MUM9</accession>
<dbReference type="EC" id="1.97.1.12" evidence="2"/>
<dbReference type="EMBL" id="AF166114">
    <property type="protein sequence ID" value="AAF43871.1"/>
    <property type="molecule type" value="Genomic_DNA"/>
</dbReference>
<dbReference type="RefSeq" id="NP_038431.1">
    <property type="nucleotide sequence ID" value="NC_002186.1"/>
</dbReference>
<dbReference type="SMR" id="Q9MUM9"/>
<dbReference type="GeneID" id="800975"/>
<dbReference type="GO" id="GO:0009535">
    <property type="term" value="C:chloroplast thylakoid membrane"/>
    <property type="evidence" value="ECO:0007669"/>
    <property type="project" value="UniProtKB-SubCell"/>
</dbReference>
<dbReference type="GO" id="GO:0009522">
    <property type="term" value="C:photosystem I"/>
    <property type="evidence" value="ECO:0007669"/>
    <property type="project" value="UniProtKB-KW"/>
</dbReference>
<dbReference type="GO" id="GO:0051539">
    <property type="term" value="F:4 iron, 4 sulfur cluster binding"/>
    <property type="evidence" value="ECO:0007669"/>
    <property type="project" value="UniProtKB-KW"/>
</dbReference>
<dbReference type="GO" id="GO:0009055">
    <property type="term" value="F:electron transfer activity"/>
    <property type="evidence" value="ECO:0007669"/>
    <property type="project" value="UniProtKB-UniRule"/>
</dbReference>
<dbReference type="GO" id="GO:0046872">
    <property type="term" value="F:metal ion binding"/>
    <property type="evidence" value="ECO:0007669"/>
    <property type="project" value="UniProtKB-KW"/>
</dbReference>
<dbReference type="GO" id="GO:0016491">
    <property type="term" value="F:oxidoreductase activity"/>
    <property type="evidence" value="ECO:0007669"/>
    <property type="project" value="UniProtKB-KW"/>
</dbReference>
<dbReference type="GO" id="GO:0009773">
    <property type="term" value="P:photosynthetic electron transport in photosystem I"/>
    <property type="evidence" value="ECO:0007669"/>
    <property type="project" value="InterPro"/>
</dbReference>
<dbReference type="FunFam" id="3.30.70.20:FF:000001">
    <property type="entry name" value="Photosystem I iron-sulfur center"/>
    <property type="match status" value="1"/>
</dbReference>
<dbReference type="Gene3D" id="3.30.70.20">
    <property type="match status" value="1"/>
</dbReference>
<dbReference type="HAMAP" id="MF_01303">
    <property type="entry name" value="PSI_PsaC"/>
    <property type="match status" value="1"/>
</dbReference>
<dbReference type="InterPro" id="IPR017896">
    <property type="entry name" value="4Fe4S_Fe-S-bd"/>
</dbReference>
<dbReference type="InterPro" id="IPR017900">
    <property type="entry name" value="4Fe4S_Fe_S_CS"/>
</dbReference>
<dbReference type="InterPro" id="IPR050157">
    <property type="entry name" value="PSI_iron-sulfur_center"/>
</dbReference>
<dbReference type="InterPro" id="IPR017491">
    <property type="entry name" value="PSI_PsaC"/>
</dbReference>
<dbReference type="NCBIfam" id="TIGR03048">
    <property type="entry name" value="PS_I_psaC"/>
    <property type="match status" value="1"/>
</dbReference>
<dbReference type="PANTHER" id="PTHR24960:SF79">
    <property type="entry name" value="PHOTOSYSTEM I IRON-SULFUR CENTER"/>
    <property type="match status" value="1"/>
</dbReference>
<dbReference type="PANTHER" id="PTHR24960">
    <property type="entry name" value="PHOTOSYSTEM I IRON-SULFUR CENTER-RELATED"/>
    <property type="match status" value="1"/>
</dbReference>
<dbReference type="Pfam" id="PF12838">
    <property type="entry name" value="Fer4_7"/>
    <property type="match status" value="1"/>
</dbReference>
<dbReference type="SUPFAM" id="SSF54862">
    <property type="entry name" value="4Fe-4S ferredoxins"/>
    <property type="match status" value="1"/>
</dbReference>
<dbReference type="PROSITE" id="PS00198">
    <property type="entry name" value="4FE4S_FER_1"/>
    <property type="match status" value="2"/>
</dbReference>
<dbReference type="PROSITE" id="PS51379">
    <property type="entry name" value="4FE4S_FER_2"/>
    <property type="match status" value="2"/>
</dbReference>
<geneLocation type="chloroplast"/>
<keyword id="KW-0004">4Fe-4S</keyword>
<keyword id="KW-0150">Chloroplast</keyword>
<keyword id="KW-0249">Electron transport</keyword>
<keyword id="KW-0408">Iron</keyword>
<keyword id="KW-0411">Iron-sulfur</keyword>
<keyword id="KW-0472">Membrane</keyword>
<keyword id="KW-0479">Metal-binding</keyword>
<keyword id="KW-0560">Oxidoreductase</keyword>
<keyword id="KW-0602">Photosynthesis</keyword>
<keyword id="KW-0603">Photosystem I</keyword>
<keyword id="KW-0934">Plastid</keyword>
<keyword id="KW-0677">Repeat</keyword>
<keyword id="KW-0793">Thylakoid</keyword>
<keyword id="KW-0813">Transport</keyword>
<proteinExistence type="inferred from homology"/>
<evidence type="ECO:0000250" key="1"/>
<evidence type="ECO:0000255" key="2">
    <source>
        <dbReference type="HAMAP-Rule" id="MF_01303"/>
    </source>
</evidence>
<gene>
    <name evidence="2" type="primary">psaC</name>
</gene>
<feature type="initiator methionine" description="Removed" evidence="1">
    <location>
        <position position="1"/>
    </location>
</feature>
<feature type="chain" id="PRO_0000061989" description="Photosystem I iron-sulfur center">
    <location>
        <begin position="2"/>
        <end position="81"/>
    </location>
</feature>
<feature type="domain" description="4Fe-4S ferredoxin-type 1" evidence="2">
    <location>
        <begin position="2"/>
        <end position="31"/>
    </location>
</feature>
<feature type="domain" description="4Fe-4S ferredoxin-type 2" evidence="2">
    <location>
        <begin position="39"/>
        <end position="68"/>
    </location>
</feature>
<feature type="binding site" evidence="2">
    <location>
        <position position="11"/>
    </location>
    <ligand>
        <name>[4Fe-4S] cluster</name>
        <dbReference type="ChEBI" id="CHEBI:49883"/>
        <label>1</label>
    </ligand>
</feature>
<feature type="binding site" evidence="2">
    <location>
        <position position="14"/>
    </location>
    <ligand>
        <name>[4Fe-4S] cluster</name>
        <dbReference type="ChEBI" id="CHEBI:49883"/>
        <label>1</label>
    </ligand>
</feature>
<feature type="binding site" evidence="2">
    <location>
        <position position="17"/>
    </location>
    <ligand>
        <name>[4Fe-4S] cluster</name>
        <dbReference type="ChEBI" id="CHEBI:49883"/>
        <label>1</label>
    </ligand>
</feature>
<feature type="binding site" evidence="2">
    <location>
        <position position="21"/>
    </location>
    <ligand>
        <name>[4Fe-4S] cluster</name>
        <dbReference type="ChEBI" id="CHEBI:49883"/>
        <label>2</label>
    </ligand>
</feature>
<feature type="binding site" evidence="2">
    <location>
        <position position="48"/>
    </location>
    <ligand>
        <name>[4Fe-4S] cluster</name>
        <dbReference type="ChEBI" id="CHEBI:49883"/>
        <label>2</label>
    </ligand>
</feature>
<feature type="binding site" evidence="2">
    <location>
        <position position="51"/>
    </location>
    <ligand>
        <name>[4Fe-4S] cluster</name>
        <dbReference type="ChEBI" id="CHEBI:49883"/>
        <label>2</label>
    </ligand>
</feature>
<feature type="binding site" evidence="2">
    <location>
        <position position="54"/>
    </location>
    <ligand>
        <name>[4Fe-4S] cluster</name>
        <dbReference type="ChEBI" id="CHEBI:49883"/>
        <label>2</label>
    </ligand>
</feature>
<feature type="binding site" evidence="2">
    <location>
        <position position="58"/>
    </location>
    <ligand>
        <name>[4Fe-4S] cluster</name>
        <dbReference type="ChEBI" id="CHEBI:49883"/>
        <label>1</label>
    </ligand>
</feature>
<comment type="function">
    <text evidence="2">Apoprotein for the two 4Fe-4S centers FA and FB of photosystem I (PSI); essential for photochemical activity. FB is the terminal electron acceptor of PSI, donating electrons to ferredoxin. The C-terminus interacts with PsaA/B/D and helps assemble the protein into the PSI complex. Required for binding of PsaD and PsaE to PSI. PSI is a plastocyanin-ferredoxin oxidoreductase, converting photonic excitation into a charge separation, which transfers an electron from the donor P700 chlorophyll pair to the spectroscopically characterized acceptors A0, A1, FX, FA and FB in turn.</text>
</comment>
<comment type="catalytic activity">
    <reaction evidence="2">
        <text>reduced [plastocyanin] + hnu + oxidized [2Fe-2S]-[ferredoxin] = oxidized [plastocyanin] + reduced [2Fe-2S]-[ferredoxin]</text>
        <dbReference type="Rhea" id="RHEA:30407"/>
        <dbReference type="Rhea" id="RHEA-COMP:10000"/>
        <dbReference type="Rhea" id="RHEA-COMP:10001"/>
        <dbReference type="Rhea" id="RHEA-COMP:10039"/>
        <dbReference type="Rhea" id="RHEA-COMP:10040"/>
        <dbReference type="ChEBI" id="CHEBI:29036"/>
        <dbReference type="ChEBI" id="CHEBI:30212"/>
        <dbReference type="ChEBI" id="CHEBI:33737"/>
        <dbReference type="ChEBI" id="CHEBI:33738"/>
        <dbReference type="ChEBI" id="CHEBI:49552"/>
        <dbReference type="EC" id="1.97.1.12"/>
    </reaction>
</comment>
<comment type="cofactor">
    <cofactor evidence="2">
        <name>[4Fe-4S] cluster</name>
        <dbReference type="ChEBI" id="CHEBI:49883"/>
    </cofactor>
    <text evidence="2">Binds 2 [4Fe-4S] clusters. Cluster 2 is most probably the spectroscopically characterized electron acceptor FA and cluster 1 is most probably FB.</text>
</comment>
<comment type="subunit">
    <text evidence="2">The eukaryotic PSI reaction center is composed of at least 11 subunits.</text>
</comment>
<comment type="subcellular location">
    <subcellularLocation>
        <location evidence="2">Plastid</location>
        <location evidence="2">Chloroplast thylakoid membrane</location>
        <topology evidence="2">Peripheral membrane protein</topology>
        <orientation evidence="2">Stromal side</orientation>
    </subcellularLocation>
</comment>
<protein>
    <recommendedName>
        <fullName evidence="2">Photosystem I iron-sulfur center</fullName>
        <ecNumber evidence="2">1.97.1.12</ecNumber>
    </recommendedName>
    <alternativeName>
        <fullName evidence="2">9 kDa polypeptide</fullName>
    </alternativeName>
    <alternativeName>
        <fullName evidence="2">PSI-C</fullName>
    </alternativeName>
    <alternativeName>
        <fullName evidence="2">Photosystem I subunit VII</fullName>
    </alternativeName>
    <alternativeName>
        <fullName evidence="2">PsaC</fullName>
    </alternativeName>
</protein>
<reference key="1">
    <citation type="journal article" date="2000" name="Nature">
        <title>Ancestral chloroplast genome in Mesostigma viride reveals an early branch of green plant evolution.</title>
        <authorList>
            <person name="Lemieux C."/>
            <person name="Otis C."/>
            <person name="Turmel M."/>
        </authorList>
    </citation>
    <scope>NUCLEOTIDE SEQUENCE [LARGE SCALE GENOMIC DNA]</scope>
    <source>
        <strain>NIES-296 / KY-14 / CCMP 2046</strain>
    </source>
</reference>
<name>PSAC_MESVI</name>
<sequence>MAHSVKIYATCIGCTQCVRACPTDVLEMVPWDGCKANQIASAPRTEDCVGCKRCESACPTDFLSVRVYLGNESTRSMGLAY</sequence>